<organism>
    <name type="scientific">Picea abies</name>
    <name type="common">Norway spruce</name>
    <name type="synonym">Picea excelsa</name>
    <dbReference type="NCBI Taxonomy" id="3329"/>
    <lineage>
        <taxon>Eukaryota</taxon>
        <taxon>Viridiplantae</taxon>
        <taxon>Streptophyta</taxon>
        <taxon>Embryophyta</taxon>
        <taxon>Tracheophyta</taxon>
        <taxon>Spermatophyta</taxon>
        <taxon>Pinopsida</taxon>
        <taxon>Pinidae</taxon>
        <taxon>Conifers I</taxon>
        <taxon>Pinales</taxon>
        <taxon>Pinaceae</taxon>
        <taxon>Picea</taxon>
    </lineage>
</organism>
<sequence length="109" mass="11570">APNTNFVSSACNTQKIPSGNPFFNNLGAMLADLKQNTAFSGYDYKTSRAGSGGAPTAYGRAICKSSISQSDCTACLSNLVGRIWGICSNAIGARVQLTDCFIQYEQHSF</sequence>
<comment type="function">
    <text evidence="1">Exerts antifungal activity through its carbohydrate-binding specificity.</text>
</comment>
<gene>
    <name evidence="4" type="primary">EMB24</name>
</gene>
<protein>
    <recommendedName>
        <fullName evidence="3">Antifungal protein ginkbilobin-like protein</fullName>
    </recommendedName>
    <alternativeName>
        <fullName evidence="3">Embryo-abundant protein 24</fullName>
    </alternativeName>
</protein>
<name>GNKL_PICAB</name>
<proteinExistence type="inferred from homology"/>
<evidence type="ECO:0000250" key="1">
    <source>
        <dbReference type="UniProtKB" id="A4ZDL6"/>
    </source>
</evidence>
<evidence type="ECO:0000255" key="2">
    <source>
        <dbReference type="PROSITE-ProRule" id="PRU00806"/>
    </source>
</evidence>
<evidence type="ECO:0000305" key="3"/>
<evidence type="ECO:0000312" key="4">
    <source>
        <dbReference type="EMBL" id="ABA54812.1"/>
    </source>
</evidence>
<reference key="1">
    <citation type="journal article" date="2006" name="Mol. Ecol. Notes">
        <title>A set of polymorphic EST-derived markers for Picea species.</title>
        <authorList>
            <person name="Lamothe M."/>
            <person name="Meirmans P."/>
            <person name="Isabel N."/>
        </authorList>
        <dbReference type="AGRICOLA" id="IND43783961"/>
    </citation>
    <scope>NUCLEOTIDE SEQUENCE [GENOMIC DNA]</scope>
    <source>
        <tissue evidence="4">Needle</tissue>
    </source>
</reference>
<keyword id="KW-0044">Antibiotic</keyword>
<keyword id="KW-0929">Antimicrobial</keyword>
<keyword id="KW-1015">Disulfide bond</keyword>
<keyword id="KW-0295">Fungicide</keyword>
<keyword id="KW-0430">Lectin</keyword>
<keyword id="KW-0465">Mannose-binding</keyword>
<keyword id="KW-0611">Plant defense</keyword>
<accession>Q3I3X0</accession>
<feature type="chain" id="PRO_0000444710" description="Antifungal protein ginkbilobin-like protein">
    <location>
        <begin position="1" status="less than"/>
        <end position="109"/>
    </location>
</feature>
<feature type="domain" description="Gnk2-homologous" evidence="2">
    <location>
        <begin position="4"/>
        <end position="109"/>
    </location>
</feature>
<feature type="binding site" evidence="1">
    <location>
        <position position="12"/>
    </location>
    <ligand>
        <name>alpha-D-mannopyranose</name>
        <dbReference type="ChEBI" id="CHEBI:28729"/>
    </ligand>
</feature>
<feature type="binding site" evidence="1">
    <location>
        <position position="94"/>
    </location>
    <ligand>
        <name>alpha-D-mannopyranose</name>
        <dbReference type="ChEBI" id="CHEBI:28729"/>
    </ligand>
</feature>
<feature type="binding site" evidence="1">
    <location>
        <position position="105"/>
    </location>
    <ligand>
        <name>alpha-D-mannopyranose</name>
        <dbReference type="ChEBI" id="CHEBI:28729"/>
    </ligand>
</feature>
<feature type="disulfide bond" evidence="2">
    <location>
        <begin position="11"/>
        <end position="87"/>
    </location>
</feature>
<feature type="disulfide bond" evidence="2">
    <location>
        <begin position="63"/>
        <end position="72"/>
    </location>
</feature>
<feature type="disulfide bond" evidence="2">
    <location>
        <begin position="75"/>
        <end position="100"/>
    </location>
</feature>
<feature type="non-terminal residue" evidence="4">
    <location>
        <position position="1"/>
    </location>
</feature>
<dbReference type="EMBL" id="DQ120094">
    <property type="protein sequence ID" value="ABA54812.1"/>
    <property type="molecule type" value="Genomic_DNA"/>
</dbReference>
<dbReference type="SMR" id="Q3I3X0"/>
<dbReference type="GO" id="GO:0005537">
    <property type="term" value="F:D-mannose binding"/>
    <property type="evidence" value="ECO:0007669"/>
    <property type="project" value="UniProtKB-KW"/>
</dbReference>
<dbReference type="GO" id="GO:0042742">
    <property type="term" value="P:defense response to bacterium"/>
    <property type="evidence" value="ECO:0007669"/>
    <property type="project" value="UniProtKB-KW"/>
</dbReference>
<dbReference type="GO" id="GO:0050832">
    <property type="term" value="P:defense response to fungus"/>
    <property type="evidence" value="ECO:0000250"/>
    <property type="project" value="UniProtKB"/>
</dbReference>
<dbReference type="GO" id="GO:0031640">
    <property type="term" value="P:killing of cells of another organism"/>
    <property type="evidence" value="ECO:0007669"/>
    <property type="project" value="UniProtKB-KW"/>
</dbReference>
<dbReference type="CDD" id="cd23509">
    <property type="entry name" value="Gnk2-like"/>
    <property type="match status" value="1"/>
</dbReference>
<dbReference type="FunFam" id="3.30.430.20:FF:000039">
    <property type="entry name" value="Antifungal protein ginkbilobin-2"/>
    <property type="match status" value="1"/>
</dbReference>
<dbReference type="Gene3D" id="3.30.430.20">
    <property type="entry name" value="Gnk2 domain, C-X8-C-X2-C motif"/>
    <property type="match status" value="1"/>
</dbReference>
<dbReference type="InterPro" id="IPR051378">
    <property type="entry name" value="Cell2Cell_Antifungal"/>
</dbReference>
<dbReference type="InterPro" id="IPR002902">
    <property type="entry name" value="GNK2"/>
</dbReference>
<dbReference type="InterPro" id="IPR038408">
    <property type="entry name" value="GNK2_sf"/>
</dbReference>
<dbReference type="PANTHER" id="PTHR32080">
    <property type="entry name" value="ANTIFUNGAL PROTEIN GINKBILOBIN-2-LIKE"/>
    <property type="match status" value="1"/>
</dbReference>
<dbReference type="PANTHER" id="PTHR32080:SF54">
    <property type="entry name" value="GNK2-HOMOLOGOUS DOMAIN-CONTAINING PROTEIN"/>
    <property type="match status" value="1"/>
</dbReference>
<dbReference type="Pfam" id="PF01657">
    <property type="entry name" value="Stress-antifung"/>
    <property type="match status" value="1"/>
</dbReference>
<dbReference type="PROSITE" id="PS51473">
    <property type="entry name" value="GNK2"/>
    <property type="match status" value="1"/>
</dbReference>